<protein>
    <recommendedName>
        <fullName evidence="1">N-methyl-L-tryptophan oxidase</fullName>
        <shortName evidence="1">MTOX</shortName>
        <ecNumber evidence="1">1.5.3.-</ecNumber>
    </recommendedName>
</protein>
<feature type="chain" id="PRO_0000213772" description="N-methyl-L-tryptophan oxidase">
    <location>
        <begin position="1"/>
        <end position="371"/>
    </location>
</feature>
<feature type="binding site" evidence="1">
    <location>
        <begin position="4"/>
        <end position="34"/>
    </location>
    <ligand>
        <name>FAD</name>
        <dbReference type="ChEBI" id="CHEBI:57692"/>
    </ligand>
</feature>
<feature type="modified residue" description="S-8alpha-FAD cysteine" evidence="1">
    <location>
        <position position="307"/>
    </location>
</feature>
<name>MTOX_YERPS</name>
<evidence type="ECO:0000255" key="1">
    <source>
        <dbReference type="HAMAP-Rule" id="MF_00515"/>
    </source>
</evidence>
<comment type="function">
    <text evidence="1">Catalyzes the oxidative demethylation of N-methyl-L-tryptophan.</text>
</comment>
<comment type="catalytic activity">
    <reaction evidence="1">
        <text>N(alpha)-methyl-L-tryptophan + O2 + H2O = L-tryptophan + formaldehyde + H2O2</text>
        <dbReference type="Rhea" id="RHEA:28006"/>
        <dbReference type="ChEBI" id="CHEBI:15377"/>
        <dbReference type="ChEBI" id="CHEBI:15379"/>
        <dbReference type="ChEBI" id="CHEBI:16240"/>
        <dbReference type="ChEBI" id="CHEBI:16842"/>
        <dbReference type="ChEBI" id="CHEBI:57283"/>
        <dbReference type="ChEBI" id="CHEBI:57912"/>
    </reaction>
</comment>
<comment type="cofactor">
    <cofactor evidence="1">
        <name>FAD</name>
        <dbReference type="ChEBI" id="CHEBI:57692"/>
    </cofactor>
    <text evidence="1">Binds 1 FAD per subunit.</text>
</comment>
<comment type="subunit">
    <text evidence="1">Monomer.</text>
</comment>
<comment type="similarity">
    <text evidence="1">Belongs to the MSOX/MTOX family. MTOX subfamily.</text>
</comment>
<accession>Q669J9</accession>
<reference key="1">
    <citation type="journal article" date="2004" name="Proc. Natl. Acad. Sci. U.S.A.">
        <title>Insights into the evolution of Yersinia pestis through whole-genome comparison with Yersinia pseudotuberculosis.</title>
        <authorList>
            <person name="Chain P.S.G."/>
            <person name="Carniel E."/>
            <person name="Larimer F.W."/>
            <person name="Lamerdin J."/>
            <person name="Stoutland P.O."/>
            <person name="Regala W.M."/>
            <person name="Georgescu A.M."/>
            <person name="Vergez L.M."/>
            <person name="Land M.L."/>
            <person name="Motin V.L."/>
            <person name="Brubaker R.R."/>
            <person name="Fowler J."/>
            <person name="Hinnebusch J."/>
            <person name="Marceau M."/>
            <person name="Medigue C."/>
            <person name="Simonet M."/>
            <person name="Chenal-Francisque V."/>
            <person name="Souza B."/>
            <person name="Dacheux D."/>
            <person name="Elliott J.M."/>
            <person name="Derbise A."/>
            <person name="Hauser L.J."/>
            <person name="Garcia E."/>
        </authorList>
    </citation>
    <scope>NUCLEOTIDE SEQUENCE [LARGE SCALE GENOMIC DNA]</scope>
    <source>
        <strain>IP32953</strain>
    </source>
</reference>
<proteinExistence type="inferred from homology"/>
<gene>
    <name evidence="1" type="primary">solA</name>
    <name type="ordered locus">YPTB2485</name>
</gene>
<sequence>MDYDLIVIGSGSVGSAAGYYASQAGLNVLMIDSAMPPHQAGSHHGETRIMRHAYGEGEKYVPLVLRAQALWDQLAAQTGEKLFQACGVINLGPDNSTFLQNVQRSAQQYDLPVETLNSTQIREKWPVFTVPDNYIAVFEPQSGYLRSELAVKTLIKAVTEAGCGILFNCPVTAIESHQAGVDVVTIDGTYSATKVVVTAGTWVKELLPTLPVTPVRKVFSWHQADGRYSEANHFPAFTVEMPDNILYYGFPAQNDALKLGKHHGGQLIESAAQRKPFGRYAEDGTEVFSFLRHFLPGVGVCLRGEACSYDMSPDEDFIIDTLPEDERVMVVSGLSGHGFKFATALGEVAALFAQDKPSPIDISAFSLARFR</sequence>
<organism>
    <name type="scientific">Yersinia pseudotuberculosis serotype I (strain IP32953)</name>
    <dbReference type="NCBI Taxonomy" id="273123"/>
    <lineage>
        <taxon>Bacteria</taxon>
        <taxon>Pseudomonadati</taxon>
        <taxon>Pseudomonadota</taxon>
        <taxon>Gammaproteobacteria</taxon>
        <taxon>Enterobacterales</taxon>
        <taxon>Yersiniaceae</taxon>
        <taxon>Yersinia</taxon>
    </lineage>
</organism>
<keyword id="KW-0274">FAD</keyword>
<keyword id="KW-0285">Flavoprotein</keyword>
<keyword id="KW-0560">Oxidoreductase</keyword>
<dbReference type="EC" id="1.5.3.-" evidence="1"/>
<dbReference type="EMBL" id="BX936398">
    <property type="protein sequence ID" value="CAH21723.1"/>
    <property type="molecule type" value="Genomic_DNA"/>
</dbReference>
<dbReference type="RefSeq" id="WP_002211850.1">
    <property type="nucleotide sequence ID" value="NZ_CP009712.1"/>
</dbReference>
<dbReference type="SMR" id="Q669J9"/>
<dbReference type="GeneID" id="57976231"/>
<dbReference type="KEGG" id="ypo:BZ17_4152"/>
<dbReference type="KEGG" id="yps:YPTB2485"/>
<dbReference type="PATRIC" id="fig|273123.14.peg.4374"/>
<dbReference type="Proteomes" id="UP000001011">
    <property type="component" value="Chromosome"/>
</dbReference>
<dbReference type="GO" id="GO:0005829">
    <property type="term" value="C:cytosol"/>
    <property type="evidence" value="ECO:0007669"/>
    <property type="project" value="TreeGrafter"/>
</dbReference>
<dbReference type="GO" id="GO:0050660">
    <property type="term" value="F:flavin adenine dinucleotide binding"/>
    <property type="evidence" value="ECO:0007669"/>
    <property type="project" value="InterPro"/>
</dbReference>
<dbReference type="GO" id="GO:0050131">
    <property type="term" value="F:N-methyl-L-amino-acid oxidase activity"/>
    <property type="evidence" value="ECO:0007669"/>
    <property type="project" value="InterPro"/>
</dbReference>
<dbReference type="GO" id="GO:0008115">
    <property type="term" value="F:sarcosine oxidase activity"/>
    <property type="evidence" value="ECO:0007669"/>
    <property type="project" value="TreeGrafter"/>
</dbReference>
<dbReference type="Gene3D" id="3.30.9.10">
    <property type="entry name" value="D-Amino Acid Oxidase, subunit A, domain 2"/>
    <property type="match status" value="1"/>
</dbReference>
<dbReference type="Gene3D" id="3.50.50.60">
    <property type="entry name" value="FAD/NAD(P)-binding domain"/>
    <property type="match status" value="1"/>
</dbReference>
<dbReference type="HAMAP" id="MF_00515">
    <property type="entry name" value="MTOX"/>
    <property type="match status" value="1"/>
</dbReference>
<dbReference type="InterPro" id="IPR006076">
    <property type="entry name" value="FAD-dep_OxRdtase"/>
</dbReference>
<dbReference type="InterPro" id="IPR036188">
    <property type="entry name" value="FAD/NAD-bd_sf"/>
</dbReference>
<dbReference type="InterPro" id="IPR023493">
    <property type="entry name" value="Me_Trp_Oxase_MTOX"/>
</dbReference>
<dbReference type="InterPro" id="IPR045170">
    <property type="entry name" value="MTOX"/>
</dbReference>
<dbReference type="NCBIfam" id="NF008425">
    <property type="entry name" value="PRK11259.1"/>
    <property type="match status" value="1"/>
</dbReference>
<dbReference type="PANTHER" id="PTHR10961:SF7">
    <property type="entry name" value="FAD DEPENDENT OXIDOREDUCTASE DOMAIN-CONTAINING PROTEIN"/>
    <property type="match status" value="1"/>
</dbReference>
<dbReference type="PANTHER" id="PTHR10961">
    <property type="entry name" value="PEROXISOMAL SARCOSINE OXIDASE"/>
    <property type="match status" value="1"/>
</dbReference>
<dbReference type="Pfam" id="PF01266">
    <property type="entry name" value="DAO"/>
    <property type="match status" value="1"/>
</dbReference>
<dbReference type="SUPFAM" id="SSF54373">
    <property type="entry name" value="FAD-linked reductases, C-terminal domain"/>
    <property type="match status" value="1"/>
</dbReference>
<dbReference type="SUPFAM" id="SSF51905">
    <property type="entry name" value="FAD/NAD(P)-binding domain"/>
    <property type="match status" value="1"/>
</dbReference>